<evidence type="ECO:0000250" key="1"/>
<evidence type="ECO:0000269" key="2">
    <source>
    </source>
</evidence>
<evidence type="ECO:0000269" key="3">
    <source>
    </source>
</evidence>
<evidence type="ECO:0000269" key="4">
    <source>
    </source>
</evidence>
<evidence type="ECO:0000269" key="5">
    <source>
    </source>
</evidence>
<evidence type="ECO:0000269" key="6">
    <source>
    </source>
</evidence>
<evidence type="ECO:0000305" key="7"/>
<gene>
    <name type="primary">SOT17</name>
    <name type="synonym">ST5C</name>
    <name type="ordered locus">At1g18590</name>
    <name type="ORF">F25I16.7</name>
    <name type="ORF">F25I16_11</name>
</gene>
<feature type="chain" id="PRO_0000315846" description="Cytosolic sulfotransferase 17">
    <location>
        <begin position="1"/>
        <end position="346"/>
    </location>
</feature>
<feature type="active site" description="Proton acceptor" evidence="1">
    <location>
        <position position="151"/>
    </location>
</feature>
<feature type="binding site" evidence="1">
    <location>
        <begin position="89"/>
        <end position="94"/>
    </location>
    <ligand>
        <name>3'-phosphoadenylyl sulfate</name>
        <dbReference type="ChEBI" id="CHEBI:58339"/>
    </ligand>
</feature>
<feature type="binding site" evidence="1">
    <location>
        <position position="173"/>
    </location>
    <ligand>
        <name>3'-phosphoadenylyl sulfate</name>
        <dbReference type="ChEBI" id="CHEBI:58339"/>
    </ligand>
</feature>
<feature type="binding site" evidence="1">
    <location>
        <position position="181"/>
    </location>
    <ligand>
        <name>3'-phosphoadenylyl sulfate</name>
        <dbReference type="ChEBI" id="CHEBI:58339"/>
    </ligand>
</feature>
<feature type="binding site" evidence="1">
    <location>
        <position position="239"/>
    </location>
    <ligand>
        <name>3'-phosphoadenylyl sulfate</name>
        <dbReference type="ChEBI" id="CHEBI:58339"/>
    </ligand>
</feature>
<feature type="binding site" evidence="1">
    <location>
        <begin position="309"/>
        <end position="311"/>
    </location>
    <ligand>
        <name>3'-phosphoadenylyl sulfate</name>
        <dbReference type="ChEBI" id="CHEBI:58339"/>
    </ligand>
</feature>
<feature type="sequence variant" description="In strain: cv. C24." evidence="4">
    <original>W</original>
    <variation>R</variation>
    <location>
        <position position="183"/>
    </location>
</feature>
<feature type="sequence variant" description="In strain: cv. C24." evidence="4">
    <original>S</original>
    <variation>T</variation>
    <location>
        <position position="344"/>
    </location>
</feature>
<comment type="function">
    <text evidence="2 3 4 5 6">Sulfotransferase that utilizes 3'-phospho-5'-adenylyl sulfate (PAPS) as sulfonate donor to catalyze the sulfate conjugation of desulfo-glucosinolates (dsGSs), the final step in the biosynthesis of the glucosinolate core structure. Substrate preference is desulfo-benzyl glucosinolate &gt; desulfo-6-methylthiohexyl glucosinolate. Increased specific activity with increasing chain length of desulfo-glucosinolate derived from methionine. Preferred substrate is desulfo-8-methylthiooctyl glucosinolate.</text>
</comment>
<comment type="catalytic activity">
    <reaction evidence="2 4 5">
        <text>an aliphatic (Z)-desulfo-glucosinolate + 3'-phosphoadenylyl sulfate = a (Z)-omega-(methylsulfanyl)-N-sulfo-alkylhydroximate S-glucoside + adenosine 3',5'-bisphosphate + H(+)</text>
        <dbReference type="Rhea" id="RHEA:52724"/>
        <dbReference type="Rhea" id="RHEA-COMP:13194"/>
        <dbReference type="Rhea" id="RHEA-COMP:18240"/>
        <dbReference type="ChEBI" id="CHEBI:15378"/>
        <dbReference type="ChEBI" id="CHEBI:58339"/>
        <dbReference type="ChEBI" id="CHEBI:58343"/>
        <dbReference type="ChEBI" id="CHEBI:136434"/>
        <dbReference type="ChEBI" id="CHEBI:192830"/>
        <dbReference type="EC" id="2.8.2.38"/>
    </reaction>
</comment>
<comment type="activity regulation">
    <text>Inhibited by phosphoadenosine 5'-phosphate (PAP).</text>
</comment>
<comment type="biophysicochemical properties">
    <kinetics>
        <KM evidence="4 5">100 uM for desulfo-benzyl glucosinolate</KM>
        <KM evidence="4 5">25 uM for 3'-phospho-5'-adenylyl sulfate</KM>
        <KM evidence="4 5">88 uM for desulfo-3-methylthiopropyl glucosinolate</KM>
        <KM evidence="4 5">65 uM for desulfo-4-methylthiobutyl glucosinolate</KM>
        <Vmax evidence="4 5">125.0 pmol/sec/mg enzyme with desulfo-benzyl glucosinolate as substrate</Vmax>
        <Vmax evidence="4 5">142.0 pmol/sec/mg enzyme with 3'-phospho-5'-adenylyl sulfate as substrate</Vmax>
        <Vmax evidence="4 5">439.0 pmol/sec/mg enzyme with desulfo-3-methylthiopropyl glucosinolate as substrate</Vmax>
        <Vmax evidence="4 5">575.0 pmol/sec/mg enzyme with desulfo-4-methylthiobutyl glucosinolate as substrate</Vmax>
    </kinetics>
    <phDependence>
        <text evidence="4 5">Optimum pH is 9.0.</text>
    </phDependence>
</comment>
<comment type="subcellular location">
    <subcellularLocation>
        <location evidence="4">Cytoplasm</location>
    </subcellularLocation>
</comment>
<comment type="tissue specificity">
    <text evidence="4">Highly expressed in roots, stems and mature leaves. Low expression in young leaves and flowers. Barely detected in siliques.</text>
</comment>
<comment type="developmental stage">
    <text evidence="4">Expression reaching a maximum in 2-week-old plants and a minimum in flowering plants.</text>
</comment>
<comment type="induction">
    <text evidence="2 4">Induced by coronatine, but not by methyl jasmonate or high sulfate concentration.</text>
</comment>
<comment type="similarity">
    <text evidence="7">Belongs to the sulfotransferase 1 family.</text>
</comment>
<accession>Q9FZ80</accession>
<dbReference type="EC" id="2.8.2.38" evidence="2 4 5"/>
<dbReference type="EMBL" id="AC026238">
    <property type="protein sequence ID" value="AAF98415.1"/>
    <property type="molecule type" value="Genomic_DNA"/>
</dbReference>
<dbReference type="EMBL" id="CP002684">
    <property type="protein sequence ID" value="AEE29732.1"/>
    <property type="molecule type" value="Genomic_DNA"/>
</dbReference>
<dbReference type="EMBL" id="BT005398">
    <property type="protein sequence ID" value="AAO63818.1"/>
    <property type="molecule type" value="mRNA"/>
</dbReference>
<dbReference type="EMBL" id="AK117408">
    <property type="protein sequence ID" value="BAC42075.1"/>
    <property type="molecule type" value="mRNA"/>
</dbReference>
<dbReference type="PIR" id="E86319">
    <property type="entry name" value="E86319"/>
</dbReference>
<dbReference type="RefSeq" id="NP_173294.1">
    <property type="nucleotide sequence ID" value="NM_101717.3"/>
</dbReference>
<dbReference type="SMR" id="Q9FZ80"/>
<dbReference type="FunCoup" id="Q9FZ80">
    <property type="interactions" value="67"/>
</dbReference>
<dbReference type="STRING" id="3702.Q9FZ80"/>
<dbReference type="iPTMnet" id="Q9FZ80"/>
<dbReference type="PaxDb" id="3702-AT1G18590.1"/>
<dbReference type="ProteomicsDB" id="232628"/>
<dbReference type="EnsemblPlants" id="AT1G18590.1">
    <property type="protein sequence ID" value="AT1G18590.1"/>
    <property type="gene ID" value="AT1G18590"/>
</dbReference>
<dbReference type="GeneID" id="838440"/>
<dbReference type="Gramene" id="AT1G18590.1">
    <property type="protein sequence ID" value="AT1G18590.1"/>
    <property type="gene ID" value="AT1G18590"/>
</dbReference>
<dbReference type="KEGG" id="ath:AT1G18590"/>
<dbReference type="Araport" id="AT1G18590"/>
<dbReference type="TAIR" id="AT1G18590">
    <property type="gene designation" value="SOT17"/>
</dbReference>
<dbReference type="eggNOG" id="KOG1584">
    <property type="taxonomic scope" value="Eukaryota"/>
</dbReference>
<dbReference type="HOGENOM" id="CLU_027239_0_3_1"/>
<dbReference type="InParanoid" id="Q9FZ80"/>
<dbReference type="OMA" id="CQGLSAY"/>
<dbReference type="OrthoDB" id="205623at2759"/>
<dbReference type="PhylomeDB" id="Q9FZ80"/>
<dbReference type="BioCyc" id="MetaCyc:AT1G18590-MONOMER"/>
<dbReference type="BRENDA" id="2.8.2.38">
    <property type="organism ID" value="399"/>
</dbReference>
<dbReference type="PRO" id="PR:Q9FZ80"/>
<dbReference type="Proteomes" id="UP000006548">
    <property type="component" value="Chromosome 1"/>
</dbReference>
<dbReference type="ExpressionAtlas" id="Q9FZ80">
    <property type="expression patterns" value="baseline and differential"/>
</dbReference>
<dbReference type="GO" id="GO:0005737">
    <property type="term" value="C:cytoplasm"/>
    <property type="evidence" value="ECO:0007669"/>
    <property type="project" value="UniProtKB-SubCell"/>
</dbReference>
<dbReference type="GO" id="GO:0005634">
    <property type="term" value="C:nucleus"/>
    <property type="evidence" value="ECO:0007005"/>
    <property type="project" value="TAIR"/>
</dbReference>
<dbReference type="GO" id="GO:0120527">
    <property type="term" value="F:aliphatic desulfoglucosinolate sulfotransferase activity"/>
    <property type="evidence" value="ECO:0007669"/>
    <property type="project" value="UniProtKB-EC"/>
</dbReference>
<dbReference type="GO" id="GO:0047364">
    <property type="term" value="F:aromatic desulfoglucosinolate sulfotransferase activity"/>
    <property type="evidence" value="ECO:0000314"/>
    <property type="project" value="TAIR"/>
</dbReference>
<dbReference type="GO" id="GO:0019761">
    <property type="term" value="P:glucosinolate biosynthetic process"/>
    <property type="evidence" value="ECO:0000314"/>
    <property type="project" value="TAIR"/>
</dbReference>
<dbReference type="FunFam" id="3.40.50.300:FF:001258">
    <property type="entry name" value="Sulfotransferase"/>
    <property type="match status" value="1"/>
</dbReference>
<dbReference type="Gene3D" id="3.40.50.300">
    <property type="entry name" value="P-loop containing nucleotide triphosphate hydrolases"/>
    <property type="match status" value="1"/>
</dbReference>
<dbReference type="InterPro" id="IPR027417">
    <property type="entry name" value="P-loop_NTPase"/>
</dbReference>
<dbReference type="InterPro" id="IPR000863">
    <property type="entry name" value="Sulfotransferase_dom"/>
</dbReference>
<dbReference type="PANTHER" id="PTHR11783">
    <property type="entry name" value="SULFOTRANSFERASE SULT"/>
    <property type="match status" value="1"/>
</dbReference>
<dbReference type="Pfam" id="PF00685">
    <property type="entry name" value="Sulfotransfer_1"/>
    <property type="match status" value="1"/>
</dbReference>
<dbReference type="SUPFAM" id="SSF52540">
    <property type="entry name" value="P-loop containing nucleoside triphosphate hydrolases"/>
    <property type="match status" value="1"/>
</dbReference>
<keyword id="KW-0963">Cytoplasm</keyword>
<keyword id="KW-1185">Reference proteome</keyword>
<keyword id="KW-0808">Transferase</keyword>
<sequence>MESKTINDVVVSESNHELASSSPSEFEKNQKHYQEIIATLPHKDGWRPKDPFVEYGGHWWLQPLLEGLLHAQKFFKARPNDFFVCSYPKTGTTWLKALTFAIANRSKFDVSTNPLLKRNPHEFVPYIEIDFPFFPSVDVLKDEGNTLFSTHIPYDLLPESVVKSGCKIVYIWRDPKDTFVSMWTFAHKERSQQGPVVSIEEAFDKYCQGLSAYGPYLDHVLGYWKAYQANPDQILFLKYETMRADPLPYVKRLAEFMGYGFTKEEEEGNVVEKVVKLCSFETLKNLEANKGEKDREDRPAVYANSAYFRKGKVGDWQNYLTPEMVARIDGLMEEKFKGTGFLSSKS</sequence>
<reference key="1">
    <citation type="journal article" date="2000" name="Nature">
        <title>Sequence and analysis of chromosome 1 of the plant Arabidopsis thaliana.</title>
        <authorList>
            <person name="Theologis A."/>
            <person name="Ecker J.R."/>
            <person name="Palm C.J."/>
            <person name="Federspiel N.A."/>
            <person name="Kaul S."/>
            <person name="White O."/>
            <person name="Alonso J."/>
            <person name="Altafi H."/>
            <person name="Araujo R."/>
            <person name="Bowman C.L."/>
            <person name="Brooks S.Y."/>
            <person name="Buehler E."/>
            <person name="Chan A."/>
            <person name="Chao Q."/>
            <person name="Chen H."/>
            <person name="Cheuk R.F."/>
            <person name="Chin C.W."/>
            <person name="Chung M.K."/>
            <person name="Conn L."/>
            <person name="Conway A.B."/>
            <person name="Conway A.R."/>
            <person name="Creasy T.H."/>
            <person name="Dewar K."/>
            <person name="Dunn P."/>
            <person name="Etgu P."/>
            <person name="Feldblyum T.V."/>
            <person name="Feng J.-D."/>
            <person name="Fong B."/>
            <person name="Fujii C.Y."/>
            <person name="Gill J.E."/>
            <person name="Goldsmith A.D."/>
            <person name="Haas B."/>
            <person name="Hansen N.F."/>
            <person name="Hughes B."/>
            <person name="Huizar L."/>
            <person name="Hunter J.L."/>
            <person name="Jenkins J."/>
            <person name="Johnson-Hopson C."/>
            <person name="Khan S."/>
            <person name="Khaykin E."/>
            <person name="Kim C.J."/>
            <person name="Koo H.L."/>
            <person name="Kremenetskaia I."/>
            <person name="Kurtz D.B."/>
            <person name="Kwan A."/>
            <person name="Lam B."/>
            <person name="Langin-Hooper S."/>
            <person name="Lee A."/>
            <person name="Lee J.M."/>
            <person name="Lenz C.A."/>
            <person name="Li J.H."/>
            <person name="Li Y.-P."/>
            <person name="Lin X."/>
            <person name="Liu S.X."/>
            <person name="Liu Z.A."/>
            <person name="Luros J.S."/>
            <person name="Maiti R."/>
            <person name="Marziali A."/>
            <person name="Militscher J."/>
            <person name="Miranda M."/>
            <person name="Nguyen M."/>
            <person name="Nierman W.C."/>
            <person name="Osborne B.I."/>
            <person name="Pai G."/>
            <person name="Peterson J."/>
            <person name="Pham P.K."/>
            <person name="Rizzo M."/>
            <person name="Rooney T."/>
            <person name="Rowley D."/>
            <person name="Sakano H."/>
            <person name="Salzberg S.L."/>
            <person name="Schwartz J.R."/>
            <person name="Shinn P."/>
            <person name="Southwick A.M."/>
            <person name="Sun H."/>
            <person name="Tallon L.J."/>
            <person name="Tambunga G."/>
            <person name="Toriumi M.J."/>
            <person name="Town C.D."/>
            <person name="Utterback T."/>
            <person name="Van Aken S."/>
            <person name="Vaysberg M."/>
            <person name="Vysotskaia V.S."/>
            <person name="Walker M."/>
            <person name="Wu D."/>
            <person name="Yu G."/>
            <person name="Fraser C.M."/>
            <person name="Venter J.C."/>
            <person name="Davis R.W."/>
        </authorList>
    </citation>
    <scope>NUCLEOTIDE SEQUENCE [LARGE SCALE GENOMIC DNA]</scope>
    <source>
        <strain>cv. Columbia</strain>
    </source>
</reference>
<reference key="2">
    <citation type="journal article" date="2017" name="Plant J.">
        <title>Araport11: a complete reannotation of the Arabidopsis thaliana reference genome.</title>
        <authorList>
            <person name="Cheng C.Y."/>
            <person name="Krishnakumar V."/>
            <person name="Chan A.P."/>
            <person name="Thibaud-Nissen F."/>
            <person name="Schobel S."/>
            <person name="Town C.D."/>
        </authorList>
    </citation>
    <scope>GENOME REANNOTATION</scope>
    <source>
        <strain>cv. Columbia</strain>
    </source>
</reference>
<reference key="3">
    <citation type="journal article" date="2003" name="Science">
        <title>Empirical analysis of transcriptional activity in the Arabidopsis genome.</title>
        <authorList>
            <person name="Yamada K."/>
            <person name="Lim J."/>
            <person name="Dale J.M."/>
            <person name="Chen H."/>
            <person name="Shinn P."/>
            <person name="Palm C.J."/>
            <person name="Southwick A.M."/>
            <person name="Wu H.C."/>
            <person name="Kim C.J."/>
            <person name="Nguyen M."/>
            <person name="Pham P.K."/>
            <person name="Cheuk R.F."/>
            <person name="Karlin-Newmann G."/>
            <person name="Liu S.X."/>
            <person name="Lam B."/>
            <person name="Sakano H."/>
            <person name="Wu T."/>
            <person name="Yu G."/>
            <person name="Miranda M."/>
            <person name="Quach H.L."/>
            <person name="Tripp M."/>
            <person name="Chang C.H."/>
            <person name="Lee J.M."/>
            <person name="Toriumi M.J."/>
            <person name="Chan M.M."/>
            <person name="Tang C.C."/>
            <person name="Onodera C.S."/>
            <person name="Deng J.M."/>
            <person name="Akiyama K."/>
            <person name="Ansari Y."/>
            <person name="Arakawa T."/>
            <person name="Banh J."/>
            <person name="Banno F."/>
            <person name="Bowser L."/>
            <person name="Brooks S.Y."/>
            <person name="Carninci P."/>
            <person name="Chao Q."/>
            <person name="Choy N."/>
            <person name="Enju A."/>
            <person name="Goldsmith A.D."/>
            <person name="Gurjal M."/>
            <person name="Hansen N.F."/>
            <person name="Hayashizaki Y."/>
            <person name="Johnson-Hopson C."/>
            <person name="Hsuan V.W."/>
            <person name="Iida K."/>
            <person name="Karnes M."/>
            <person name="Khan S."/>
            <person name="Koesema E."/>
            <person name="Ishida J."/>
            <person name="Jiang P.X."/>
            <person name="Jones T."/>
            <person name="Kawai J."/>
            <person name="Kamiya A."/>
            <person name="Meyers C."/>
            <person name="Nakajima M."/>
            <person name="Narusaka M."/>
            <person name="Seki M."/>
            <person name="Sakurai T."/>
            <person name="Satou M."/>
            <person name="Tamse R."/>
            <person name="Vaysberg M."/>
            <person name="Wallender E.K."/>
            <person name="Wong C."/>
            <person name="Yamamura Y."/>
            <person name="Yuan S."/>
            <person name="Shinozaki K."/>
            <person name="Davis R.W."/>
            <person name="Theologis A."/>
            <person name="Ecker J.R."/>
        </authorList>
    </citation>
    <scope>NUCLEOTIDE SEQUENCE [LARGE SCALE MRNA]</scope>
    <source>
        <strain>cv. Columbia</strain>
    </source>
</reference>
<reference key="4">
    <citation type="journal article" date="2002" name="Science">
        <title>Functional annotation of a full-length Arabidopsis cDNA collection.</title>
        <authorList>
            <person name="Seki M."/>
            <person name="Narusaka M."/>
            <person name="Kamiya A."/>
            <person name="Ishida J."/>
            <person name="Satou M."/>
            <person name="Sakurai T."/>
            <person name="Nakajima M."/>
            <person name="Enju A."/>
            <person name="Akiyama K."/>
            <person name="Oono Y."/>
            <person name="Muramatsu M."/>
            <person name="Hayashizaki Y."/>
            <person name="Kawai J."/>
            <person name="Carninci P."/>
            <person name="Itoh M."/>
            <person name="Ishii Y."/>
            <person name="Arakawa T."/>
            <person name="Shibata K."/>
            <person name="Shinagawa A."/>
            <person name="Shinozaki K."/>
        </authorList>
    </citation>
    <scope>NUCLEOTIDE SEQUENCE [LARGE SCALE MRNA]</scope>
    <source>
        <strain>cv. Columbia</strain>
    </source>
</reference>
<reference key="5">
    <citation type="journal article" date="2004" name="J. Biol. Chem.">
        <title>Desulfoglucosinolate sulfotransferases from Arabidopsis thaliana catalyze the final step in the biosynthesis of the glucosinolate core structure.</title>
        <authorList>
            <person name="Piotrowski M."/>
            <person name="Schemenewitz A."/>
            <person name="Lopukhina A."/>
            <person name="Mueller A."/>
            <person name="Janowitz T."/>
            <person name="Weiler E.W."/>
            <person name="Oecking C."/>
        </authorList>
    </citation>
    <scope>FUNCTION</scope>
    <scope>CATALYTIC ACTIVITY</scope>
    <scope>INDUCTION</scope>
</reference>
<reference key="6">
    <citation type="journal article" date="2004" name="J. Exp. Bot.">
        <title>The multi-protein family of Arabidopsis sulphotransferases and their relatives in other plant species.</title>
        <authorList>
            <person name="Klein M."/>
            <person name="Papenbrock J."/>
        </authorList>
    </citation>
    <scope>GENE FAMILY</scope>
    <scope>NOMENCLATURE</scope>
</reference>
<reference key="7">
    <citation type="journal article" date="2005" name="J. Biol. Chem.">
        <title>Elucidation of gene-to-gene and metabolite-to-gene networks in Arabidopsis by integration of metabolomics and transcriptomics.</title>
        <authorList>
            <person name="Hirai M.Y."/>
            <person name="Klein M."/>
            <person name="Fujikawa Y."/>
            <person name="Yano M."/>
            <person name="Goodenowe D.B."/>
            <person name="Yamazaki Y."/>
            <person name="Kanaya S."/>
            <person name="Nakamura Y."/>
            <person name="Kitayama M."/>
            <person name="Suzuki H."/>
            <person name="Sakurai N."/>
            <person name="Shibata D."/>
            <person name="Tokuhisa J."/>
            <person name="Reichelt M."/>
            <person name="Gershenzon J."/>
            <person name="Papenbrock J."/>
            <person name="Saito K."/>
        </authorList>
    </citation>
    <scope>FUNCTION</scope>
    <source>
        <strain>cv. Columbia</strain>
    </source>
</reference>
<reference key="8">
    <citation type="journal article" date="2006" name="FEBS J.">
        <title>The three desulfoglucosinolate sulfotransferase proteins in Arabidopsis have different substrate specificities and are differentially expressed.</title>
        <authorList>
            <person name="Klein M."/>
            <person name="Reichelt M."/>
            <person name="Gershenzon J."/>
            <person name="Papenbrock J."/>
        </authorList>
    </citation>
    <scope>FUNCTION</scope>
    <scope>CATALYTIC ACTIVITY</scope>
    <scope>SUBCELLULAR LOCATION</scope>
    <scope>TISSUE SPECIFICITY</scope>
    <scope>DEVELOPMENTAL STAGE</scope>
    <scope>INDUCTION</scope>
    <scope>BIOPHYSICOCHEMICAL PROPERTIES</scope>
    <scope>VARIANTS ARG-183 AND THR-344</scope>
    <source>
        <strain>cv. C24</strain>
    </source>
</reference>
<reference key="9">
    <citation type="journal article" date="2009" name="Physiol. Plantarum">
        <title>Kinetics and substrate specificities of desulfo-glucosinolate sulfotransferases in Arabidopsis thaliana.</title>
        <authorList>
            <person name="Klein M."/>
            <person name="Papenbrock J."/>
        </authorList>
    </citation>
    <scope>FUNCTION</scope>
    <scope>CATALYTIC ACTIVITY</scope>
    <scope>BIOPHYSICOCHEMICAL PROPERTIES</scope>
    <source>
        <strain>cv. C24</strain>
    </source>
</reference>
<reference key="10">
    <citation type="journal article" date="2011" name="BMC Biotechnol.">
        <title>Modulation of sulfur metabolism enables efficient glucosinolate engineering.</title>
        <authorList>
            <person name="Moeldrup M.E."/>
            <person name="Geu-Flores F."/>
            <person name="Olsen C.E."/>
            <person name="Halkier B.A."/>
        </authorList>
    </citation>
    <scope>FUNCTION</scope>
</reference>
<protein>
    <recommendedName>
        <fullName>Cytosolic sulfotransferase 17</fullName>
        <shortName>AtSOT17</shortName>
        <ecNumber evidence="2 4 5">2.8.2.38</ecNumber>
    </recommendedName>
    <alternativeName>
        <fullName>Desulfoglucosinolate sulfotransferase C</fullName>
        <shortName>AtST5c</shortName>
    </alternativeName>
</protein>
<name>SOT17_ARATH</name>
<proteinExistence type="evidence at protein level"/>
<organism>
    <name type="scientific">Arabidopsis thaliana</name>
    <name type="common">Mouse-ear cress</name>
    <dbReference type="NCBI Taxonomy" id="3702"/>
    <lineage>
        <taxon>Eukaryota</taxon>
        <taxon>Viridiplantae</taxon>
        <taxon>Streptophyta</taxon>
        <taxon>Embryophyta</taxon>
        <taxon>Tracheophyta</taxon>
        <taxon>Spermatophyta</taxon>
        <taxon>Magnoliopsida</taxon>
        <taxon>eudicotyledons</taxon>
        <taxon>Gunneridae</taxon>
        <taxon>Pentapetalae</taxon>
        <taxon>rosids</taxon>
        <taxon>malvids</taxon>
        <taxon>Brassicales</taxon>
        <taxon>Brassicaceae</taxon>
        <taxon>Camelineae</taxon>
        <taxon>Arabidopsis</taxon>
    </lineage>
</organism>